<proteinExistence type="evidence at protein level"/>
<dbReference type="EMBL" id="AF111934">
    <property type="protein sequence ID" value="AAD18003.1"/>
    <property type="molecule type" value="mRNA"/>
</dbReference>
<dbReference type="EMBL" id="BX284606">
    <property type="protein sequence ID" value="CAB01693.1"/>
    <property type="molecule type" value="Genomic_DNA"/>
</dbReference>
<dbReference type="PIR" id="T19756">
    <property type="entry name" value="T19756"/>
</dbReference>
<dbReference type="RefSeq" id="NP_509924.1">
    <property type="nucleotide sequence ID" value="NM_077523.7"/>
</dbReference>
<dbReference type="SMR" id="G5EBL3"/>
<dbReference type="ComplexPortal" id="CPX-3888">
    <property type="entry name" value="SDC complex"/>
</dbReference>
<dbReference type="FunCoup" id="G5EBL3">
    <property type="interactions" value="1373"/>
</dbReference>
<dbReference type="STRING" id="6239.C35C5.1.2"/>
<dbReference type="PaxDb" id="6239-C35C5.1"/>
<dbReference type="PeptideAtlas" id="G5EBL3"/>
<dbReference type="EnsemblMetazoa" id="C35C5.1.1">
    <property type="protein sequence ID" value="C35C5.1.1"/>
    <property type="gene ID" value="WBGene00004746"/>
</dbReference>
<dbReference type="GeneID" id="181341"/>
<dbReference type="KEGG" id="cel:CELE_C35C5.1"/>
<dbReference type="AGR" id="WB:WBGene00004746"/>
<dbReference type="CTD" id="181341"/>
<dbReference type="WormBase" id="C35C5.1">
    <property type="protein sequence ID" value="CE18542"/>
    <property type="gene ID" value="WBGene00004746"/>
    <property type="gene designation" value="sdc-2"/>
</dbReference>
<dbReference type="eggNOG" id="ENOG502QPJP">
    <property type="taxonomic scope" value="Eukaryota"/>
</dbReference>
<dbReference type="GeneTree" id="ENSGT00970000196472"/>
<dbReference type="HOGENOM" id="CLU_225808_0_0_1"/>
<dbReference type="InParanoid" id="G5EBL3"/>
<dbReference type="OMA" id="YMSDEQD"/>
<dbReference type="OrthoDB" id="5826275at2759"/>
<dbReference type="PRO" id="PR:G5EBL3"/>
<dbReference type="Proteomes" id="UP000001940">
    <property type="component" value="Chromosome X"/>
</dbReference>
<dbReference type="Bgee" id="WBGene00004746">
    <property type="expression patterns" value="Expressed in embryo and 3 other cell types or tissues"/>
</dbReference>
<dbReference type="GO" id="GO:0000228">
    <property type="term" value="C:nuclear chromosome"/>
    <property type="evidence" value="ECO:0000314"/>
    <property type="project" value="WormBase"/>
</dbReference>
<dbReference type="GO" id="GO:0000805">
    <property type="term" value="C:X chromosome"/>
    <property type="evidence" value="ECO:0000314"/>
    <property type="project" value="ComplexPortal"/>
</dbReference>
<dbReference type="GO" id="GO:0030154">
    <property type="term" value="P:cell differentiation"/>
    <property type="evidence" value="ECO:0007669"/>
    <property type="project" value="UniProtKB-KW"/>
</dbReference>
<dbReference type="GO" id="GO:0042464">
    <property type="term" value="P:dosage compensation by hypoactivation of X chromosome"/>
    <property type="evidence" value="ECO:0000315"/>
    <property type="project" value="WormBase"/>
</dbReference>
<dbReference type="GO" id="GO:0010629">
    <property type="term" value="P:negative regulation of gene expression"/>
    <property type="evidence" value="ECO:0000303"/>
    <property type="project" value="ComplexPortal"/>
</dbReference>
<dbReference type="GO" id="GO:0000122">
    <property type="term" value="P:negative regulation of transcription by RNA polymerase II"/>
    <property type="evidence" value="ECO:0000315"/>
    <property type="project" value="WormBase"/>
</dbReference>
<dbReference type="GO" id="GO:0007530">
    <property type="term" value="P:sex determination"/>
    <property type="evidence" value="ECO:0000303"/>
    <property type="project" value="ComplexPortal"/>
</dbReference>
<dbReference type="GO" id="GO:0007548">
    <property type="term" value="P:sex differentiation"/>
    <property type="evidence" value="ECO:0007669"/>
    <property type="project" value="UniProtKB-KW"/>
</dbReference>
<dbReference type="PANTHER" id="PTHR13270">
    <property type="entry name" value="PROTEIN C20ORF116-RELATED"/>
    <property type="match status" value="1"/>
</dbReference>
<dbReference type="PANTHER" id="PTHR13270:SF14">
    <property type="entry name" value="SEX DETERMINATION AND DOSAGE COMPENSATION PROTEIN SDC-2"/>
    <property type="match status" value="1"/>
</dbReference>
<feature type="chain" id="PRO_0000440872" description="Sex determination and dosage compensation protein sdc-2">
    <location>
        <begin position="1"/>
        <end position="2962"/>
    </location>
</feature>
<feature type="region of interest" description="Disordered" evidence="2">
    <location>
        <begin position="1"/>
        <end position="28"/>
    </location>
</feature>
<feature type="region of interest" description="Disordered" evidence="2">
    <location>
        <begin position="1061"/>
        <end position="1110"/>
    </location>
</feature>
<feature type="region of interest" description="Disordered" evidence="2">
    <location>
        <begin position="1535"/>
        <end position="1554"/>
    </location>
</feature>
<feature type="region of interest" description="Disordered" evidence="2">
    <location>
        <begin position="2198"/>
        <end position="2227"/>
    </location>
</feature>
<feature type="coiled-coil region" evidence="1">
    <location>
        <begin position="995"/>
        <end position="1085"/>
    </location>
</feature>
<feature type="coiled-coil region" evidence="1">
    <location>
        <begin position="1140"/>
        <end position="1268"/>
    </location>
</feature>
<feature type="compositionally biased region" description="Acidic residues" evidence="2">
    <location>
        <begin position="15"/>
        <end position="27"/>
    </location>
</feature>
<feature type="compositionally biased region" description="Acidic residues" evidence="2">
    <location>
        <begin position="2212"/>
        <end position="2225"/>
    </location>
</feature>
<comment type="function">
    <text evidence="3 4 5 7 8 9 10 11 12">Component of the SDC complex that functions in sex determination and in X chromosome dosage compensation specifically in hermaphrodite (XX) animals (PubMed:10364546, PubMed:2759421). Required for the recruitment of the condensin I-like dosage compensation complex to the male sex-determining autosomal gene her-1, thereby contributing to its repression and initiating hermaphrodite sexual development (PubMed:10364546, PubMed:11937488, PubMed:14660541, PubMed:2759421). Plays a central role in X-chromosome recognition and in the recruitment and assembly of the dosage compensation complex and the dosage compensation protein dpy-21 onto the X chromosomes in hermaphrodites, which leads to a reduction of X-linked gene transcription and an equalization of X-linked gene expression between the sexes (PubMed:10364546, PubMed:14660541, PubMed:8939869, PubMed:8939870, PubMed:9056777, PubMed:9458050). May confer protection against toxicity induced by heavy metals such as arsenite (PubMed:25204677).</text>
</comment>
<comment type="subunit">
    <text evidence="4">Component of the SDC complex, which consists of sdc-1, sdc-2 and sdc-3. Within the complex, interacts with sdc-1 and sdc-3.</text>
</comment>
<comment type="subcellular location">
    <subcellularLocation>
        <location evidence="3">Chromosome</location>
    </subcellularLocation>
    <text evidence="3">Localizes specifically to X chromosomes in hermaphrodite (XX) embryos.</text>
</comment>
<comment type="tissue specificity">
    <text evidence="4">Expressed in hermaphrodites (XX), but absent in males (XO) (at protein level).</text>
</comment>
<comment type="developmental stage">
    <text evidence="3">Expressed in embryos after the 40-cell stage and in adults.</text>
</comment>
<comment type="disruption phenotype">
    <text evidence="5 6 7 8 9 10 11 12">Results in high lethality of hermaphrodites (XX) and in masculinization of surviving XX animals (PubMed:2759421). Disrupts the X-chromosome specific localization of sdc-3, dpy-21, dpy-26, dpy-27 and mix-1 (PubMed:14660541, PubMed:8939869, PubMed:8939870, PubMed:9056777, PubMed:9458050). RNAi-mediated knockdown results in 86% viability of hermaphrodites (PubMed:23666922). RNAi-mediated knockdown results in increased sensitivity to the heavy metal arsenite (PubMed:25204677). RNAi-mediated knockdown reduces the viability of hermaphrodites to 19% in a double xol-1(y9) and sex-1(y263) mutant background (PubMed:23666922). RNAi-mediated knockdown reduces the viability of hermaphrodites to 11% in a triple sea-1(y356), xol-1(y9) and sex-1(y263) mutant background (PubMed:23666922). RNAi-mediated knockdown reduces the viability of hermaphrodites to 42% in a triple sea-2(y407), xol-1(y9) sex-1(y263) mutant background (PubMed:23666922). RNAi-mediated knockdown reduces the viability of hermaphrodites to 51% in a quadruple sea-1(y356), sea-2(y407), xol-1(y9) sex-1(y263) mutant background (PubMed:23666922).</text>
</comment>
<keyword id="KW-0158">Chromosome</keyword>
<keyword id="KW-0175">Coiled coil</keyword>
<keyword id="KW-0221">Differentiation</keyword>
<keyword id="KW-1185">Reference proteome</keyword>
<keyword id="KW-0726">Sexual differentiation</keyword>
<keyword id="KW-0804">Transcription</keyword>
<keyword id="KW-0805">Transcription regulation</keyword>
<reference evidence="13" key="1">
    <citation type="journal article" date="1999" name="Science">
        <title>Dosage compensation proteins targeted to X chromosomes by a determinant of hermaphrodite fate.</title>
        <authorList>
            <person name="Dawes H.E."/>
            <person name="Berlin D.S."/>
            <person name="Lapidus D.M."/>
            <person name="Nusbaum C."/>
            <person name="Davis T.L."/>
            <person name="Meyer B.J."/>
        </authorList>
    </citation>
    <scope>NUCLEOTIDE SEQUENCE [MRNA]</scope>
    <scope>FUNCTION</scope>
    <scope>SUBCELLULAR LOCATION</scope>
    <scope>DEVELOPMENTAL STAGE</scope>
</reference>
<reference evidence="14" key="2">
    <citation type="journal article" date="1998" name="Science">
        <title>Genome sequence of the nematode C. elegans: a platform for investigating biology.</title>
        <authorList>
            <consortium name="The C. elegans sequencing consortium"/>
        </authorList>
    </citation>
    <scope>NUCLEOTIDE SEQUENCE [LARGE SCALE GENOMIC DNA]</scope>
    <source>
        <strain evidence="14">Bristol N2</strain>
    </source>
</reference>
<reference evidence="13" key="3">
    <citation type="journal article" date="1989" name="Genetics">
        <title>The Caenorhabditis elegans gene sdc-2 controls sex determination and dosage compensation in XX animals.</title>
        <authorList>
            <person name="Nusbaum C."/>
            <person name="Meyer B.J."/>
        </authorList>
    </citation>
    <scope>FUNCTION</scope>
    <scope>DISRUPTION PHENOTYPE</scope>
</reference>
<reference evidence="13" key="4">
    <citation type="journal article" date="1996" name="Science">
        <title>DPY-26, a link between dosage compensation and meiotic chromosome segregation in the nematode.</title>
        <authorList>
            <person name="Lieb J.D."/>
            <person name="Capowski E.E."/>
            <person name="Meneely P."/>
            <person name="Meyer B.J."/>
        </authorList>
    </citation>
    <scope>FUNCTION</scope>
    <scope>DISRUPTION PHENOTYPE</scope>
</reference>
<reference evidence="13" key="5">
    <citation type="journal article" date="1996" name="Science">
        <title>Sex-specific assembly of a dosage compensation complex on the nematode X chromosome.</title>
        <authorList>
            <person name="Chuang P.-T."/>
            <person name="Lieb J.D."/>
            <person name="Meyer B.J."/>
        </authorList>
    </citation>
    <scope>FUNCTION</scope>
    <scope>DISRUPTION PHENOTYPE</scope>
</reference>
<reference evidence="13" key="6">
    <citation type="journal article" date="1997" name="Development">
        <title>SDC-3 coordinates the assembly of a dosage compensation complex on the nematode X chromosome.</title>
        <authorList>
            <person name="Davis T.L."/>
            <person name="Meyer B.J."/>
        </authorList>
    </citation>
    <scope>FUNCTION</scope>
    <scope>DISRUPTION PHENOTYPE</scope>
</reference>
<reference evidence="13" key="7">
    <citation type="journal article" date="1998" name="Cell">
        <title>MIX-1: an essential component of the C. elegans mitotic machinery executes X chromosome dosage compensation.</title>
        <authorList>
            <person name="Lieb J.D."/>
            <person name="Albrecht M.R."/>
            <person name="Chuang P.-T."/>
            <person name="Meyer B.J."/>
        </authorList>
    </citation>
    <scope>FUNCTION</scope>
    <scope>DISRUPTION PHENOTYPE</scope>
</reference>
<reference evidence="13" key="8">
    <citation type="journal article" date="2002" name="Genes Dev.">
        <title>A molecular link between gene-specific and chromosome-wide transcriptional repression.</title>
        <authorList>
            <person name="Chu D.S."/>
            <person name="Dawes H.E."/>
            <person name="Lieb J.D."/>
            <person name="Chan R.C."/>
            <person name="Kuo A.F."/>
            <person name="Meyer B.J."/>
        </authorList>
    </citation>
    <scope>FUNCTION</scope>
    <scope>IDENTIFICATION IN A SDC COMPLEX</scope>
    <scope>INTERACTION WITH SDC-1 AND SDC-3</scope>
    <scope>TISSUE SPECIFICITY</scope>
</reference>
<reference evidence="13" key="9">
    <citation type="journal article" date="2003" name="Development">
        <title>Recruitment of C. elegans dosage compensation proteins for gene-specific versus chromosome-wide repression.</title>
        <authorList>
            <person name="Yonker S.A."/>
            <person name="Meyer B.J."/>
        </authorList>
    </citation>
    <scope>FUNCTION</scope>
    <scope>DISRUPTION PHENOTYPE</scope>
</reference>
<reference key="10">
    <citation type="journal article" date="2013" name="Genes Dev.">
        <title>Molecular antagonism between X-chromosome and autosome signals determines nematode sex.</title>
        <authorList>
            <person name="Farboud B."/>
            <person name="Nix P."/>
            <person name="Jow M.M."/>
            <person name="Gladden J.M."/>
            <person name="Meyer B.J."/>
        </authorList>
    </citation>
    <scope>DISRUPTION PHENOTYPE</scope>
</reference>
<reference key="11">
    <citation type="journal article" date="2014" name="BMC Biol.">
        <title>Genome-wide screening identifies new genes required for stress-induced phase 2 detoxification gene expression in animals.</title>
        <authorList>
            <person name="Crook-McMahon H.M."/>
            <person name="Olahova M."/>
            <person name="Button E.L."/>
            <person name="Winter J.J."/>
            <person name="Veal E.A."/>
        </authorList>
    </citation>
    <scope>FUNCTION</scope>
    <scope>DISRUPTION PHENOTYPE</scope>
</reference>
<name>SDC2_CAEEL</name>
<accession>G5EBL3</accession>
<gene>
    <name evidence="15" type="primary">sdc-2</name>
    <name evidence="15" type="ORF">C35C5.1</name>
</gene>
<protein>
    <recommendedName>
        <fullName evidence="13">Sex determination and dosage compensation protein sdc-2</fullName>
    </recommendedName>
</protein>
<sequence length="2962" mass="344436">MSDESELGNQSEMESFNESDSPDEADPDVVIIHDIVHLRASTTGDYSQSEIGKLPEQNTFFLPGRVKRNISSNDSDVIIDEDEIPDGAIRITSDTHFIGSSRGTSELGDFEMDEQEFLNITIEENGNEQELEEHLRNAYRHEEEECFEEEDDIIELPPLPVKPAVKKPRRKLPKHLSIESGSTAKTSKLVAEVVHDHPRPVNYRMKPAVTDDGKVVEQKRTRVTRNIMSHTIPQYHLEGEETEFGRVKESTLSKTIEQYLQAGKLVSPKCDQFREQIVATAVEYDGSVKMLQFENALKKHSGKQKRLKYQTGWWKASKSHYERAVNGYVAMPKTPVLSISDDPVLYKHHSLFPKNQSSELEKINVQLRIRLNSKRQNNDVIPDSSYFVREFLMQKHSISLRMNRSSDLPELFVPPTLECGYFPQDAVTVQQQEHYLMMRFEEAQDEYHNITYRSIAPPVEFQVGTISAKELHKFHRIGRHIHGFFVVWENKFPEYDESGICCPRKRYLVDMFNLICFPLYTEYEQWESRLRVAFDKTIVYNLHLSEILRCNRPVFDFLSKNKSMLQPITLKEIVYLIEQSNMDAKSFAVKFGLRTFYDHGRATSNKDYLSAFLIITGGAKVVTEEIDSERLRVFNSDYMESGVLTSSGDVYTFEFDKIPNNYQISIGCNADGVAEMEQEDVRHELSECSSRITRIIGDSKKPEKIIARPLVKTNQNDGMKFFTRKDLLNYRIKLYDPSYVVPRAKKQIVNEPAKKKPGRKSKTRYDAAMQQNNFEIEGVPSDVDSEFEGYLSDSENVFQKPSKLMRSTSSDSVFIDYQYREKMFLDVSWFHQQKMIDRSLPPLKKRKRKMNRIYHKHSVRYTMLQANGCAFTEMYRCYDKILPCGTKEIARTKNAIRFPHRFRTYNIPQVYGPGDKQLITEVFGVVKDVITRATGFESASIRTANDIAQAVYDANIARRELLENLEPSDNGILPSPAYLAIEMLSHQKMSGRLCLESARKDVQNNVDKMYNDYMDLDPLDKELHFEISQSIRQSKLNESLEEYERNRERQLAKTLKTVPMDKRSQAALARREEKRRESRRKLADKYAEQRRMMASTRRLEKRTTQKQVDPETIQRLRREDEVRKRKRFEEEDRRGMIRRREERVALQEKVDRMLEEGLRLEKVREAERIRQQQEEERIEMETILISRRVREEEEEKMRLERLRKAEREREQERLKREEEEERKRLEQLREAEKLKAEIEKENERKLQEERTRKALELERKIEEIKRVSTLKDMFGPLPIAKENEQTEKDFQILLDDHELTLLTISRDPLNEKYQEARTEFERLDIKSMLLRKAEKLIDVLTIHYDVPIEQTCRYFTSSIESNENRMAVNEQLNKLFENMANCFTFNIQDGENGLQSKRKWDFQFKKCAVFDGVSQSTVNFIEEKMRENTKKKHLATPKTVISIDTSLLKQSLLRSHARFDPDISLYAQNHTANSIGDVTLKMSNYSLDFATQSIHDKELAEKATPKKGPTVRRHIKNLFGSEKVIVRRSLAAGKPASLNSEDSDSEDSREGSPVAEFLPTNPVCSFWKLVVKIENSTTDKEKTELCEDLDKLILRKDDLFSKSLKWMFPLLATFYVLLSNAVLNENEEIISDKNQTGVTKDEILKSTINDLMIIAAYFEEGSRERSNLRKMISMNGFSVVFNRVILFAKKTCTLAKELESNSRSLSGYVIEDLFESLLAEIERTMRQELGSSVRKTGKLERDFEEIVKLIQNEKKLALSHKSHKNDENRRFRLNTVVKWYDAIICHCKEELTQAIVDAFPLNAITKNKETSHVAMENGDDEAMLSDTSDNQMSTTDYQMPKNICRNSEIFPEDAFAKAYAVVRIPSKKERAQMLSVYRKKNAQSGCVENKGLSRMPKFEEPFVDSVWRTIEKRINNMTHSEEKQIKRFIPVSRSHKLNEKVKFYAMVMIQERDSRDTRLFNSKFQDDNLWHCYSKSSLNHEKMESRILQHIEHTVLSKSNFNQMKWSVQCVNGNKKDAIHYFTDLYKYRSESEFRSALSCGKLKFNFKVYTHLWFMGNLLPTSYNPDSHDDKLFVPCSGCTSGDVIIIHKCTCAYHNDTFSDKFIYANTSLPVGIDKVTRLVGRFVCEHGPSSFLILEHCSANVDANIPFESENVEFSAELRIVKRKTMHSQLVKTFAEEHTHLRDASRHRAISTVTLDSSGSGRSTRCEIFEDSPSEDENDENQLDTTRIGRKIDPIIVDSDKAYLIAEGERMALRIKRLLDPELQKFRSKNFVSRSKSVDAPKTSKQKTVIRRSQSVCDLNDVNEYAQKKVRNTKDSFATLFRDHEYSTRRTYEEQLNNELLDVVTTFGGASNVSADKKYNILASILAFEKEVQLVNDKNGELFKTVSNLVQRNSLQHVKGVILAEDNQTLRSTDNTSEVFPESKAVNEYLKFEIYKRKMMVNAKLMADTVKDLKLKHAEYRPFAKLIATYDSIFKFNVYLFEHFLNCISKHVFNPYAIYCEETRPTGTELSKFQLTLKLIETSMPTVLSMLFNTEPLRRQLSELSEIHKKVRSEDLACTIASLCRYAIERIRIPQTADKRLCDFSWLNSAEDHRETVSFIRLTLEHTLPDMKTENEQTRFVEFLKEAEGFHFSYKFVEAQCKTFVRNHGDSKQAFFTAFYNQNEAFYGSLQKFMSNGTIDPKMKLYYQHQAFLRLHNIVKKRSHIITSDDYHRSSDVCKAMLLSEIVSNPKIAQEAYISGSVLDRMYTSLCKIKAKMPLISPSYIGTSLTCFEDELLFSAVREAKVHTDTRVVFRSKSCMRPNEKAGDANFKTCKVTLLVNLETALLSMVFKSRDQSEIDKDDRLDIDILDEEVIKPIIDWNRIFETFIQPTYNTLFSRMEKRERVSILPENPLGRLENYAFTNPNQDKDCQAVLEYIDVASDTDAEESIEDPLDIVEMTLKRALPRSMSPSSKRRRMR</sequence>
<evidence type="ECO:0000255" key="1"/>
<evidence type="ECO:0000256" key="2">
    <source>
        <dbReference type="SAM" id="MobiDB-lite"/>
    </source>
</evidence>
<evidence type="ECO:0000269" key="3">
    <source>
    </source>
</evidence>
<evidence type="ECO:0000269" key="4">
    <source>
    </source>
</evidence>
<evidence type="ECO:0000269" key="5">
    <source>
    </source>
</evidence>
<evidence type="ECO:0000269" key="6">
    <source>
    </source>
</evidence>
<evidence type="ECO:0000269" key="7">
    <source>
    </source>
</evidence>
<evidence type="ECO:0000269" key="8">
    <source>
    </source>
</evidence>
<evidence type="ECO:0000269" key="9">
    <source>
    </source>
</evidence>
<evidence type="ECO:0000269" key="10">
    <source>
    </source>
</evidence>
<evidence type="ECO:0000269" key="11">
    <source>
    </source>
</evidence>
<evidence type="ECO:0000269" key="12">
    <source>
    </source>
</evidence>
<evidence type="ECO:0000305" key="13"/>
<evidence type="ECO:0000312" key="14">
    <source>
        <dbReference type="Proteomes" id="UP000001940"/>
    </source>
</evidence>
<evidence type="ECO:0000312" key="15">
    <source>
        <dbReference type="WormBase" id="C35C5.1"/>
    </source>
</evidence>
<organism evidence="14">
    <name type="scientific">Caenorhabditis elegans</name>
    <dbReference type="NCBI Taxonomy" id="6239"/>
    <lineage>
        <taxon>Eukaryota</taxon>
        <taxon>Metazoa</taxon>
        <taxon>Ecdysozoa</taxon>
        <taxon>Nematoda</taxon>
        <taxon>Chromadorea</taxon>
        <taxon>Rhabditida</taxon>
        <taxon>Rhabditina</taxon>
        <taxon>Rhabditomorpha</taxon>
        <taxon>Rhabditoidea</taxon>
        <taxon>Rhabditidae</taxon>
        <taxon>Peloderinae</taxon>
        <taxon>Caenorhabditis</taxon>
    </lineage>
</organism>